<evidence type="ECO:0000255" key="1">
    <source>
        <dbReference type="HAMAP-Rule" id="MF_01346"/>
    </source>
</evidence>
<organism>
    <name type="scientific">Listeria innocua serovar 6a (strain ATCC BAA-680 / CLIP 11262)</name>
    <dbReference type="NCBI Taxonomy" id="272626"/>
    <lineage>
        <taxon>Bacteria</taxon>
        <taxon>Bacillati</taxon>
        <taxon>Bacillota</taxon>
        <taxon>Bacilli</taxon>
        <taxon>Bacillales</taxon>
        <taxon>Listeriaceae</taxon>
        <taxon>Listeria</taxon>
    </lineage>
</organism>
<proteinExistence type="inferred from homology"/>
<name>ATPA2_LISIN</name>
<accession>Q927W2</accession>
<gene>
    <name evidence="1" type="primary">atpA2</name>
    <name type="ordered locus">lin2675</name>
</gene>
<sequence>MSIKAEEISSIIKQQIENYQSELKVSDVGTVTYIGDGIARAHGLDNAMAGELLEFSNGVMGMAQNLETNDVGIIILGPYTEIREGDEVRRTGKIMEVPVGEALIGRVVNSLGQPVDGLGPIETTGTRPIEAVAPGVMQRQSVNEPLQTGIKAIDALVPIGRGQRELIIGDRQTGKTSVAIDTILNQADQDMICIYVAIGQKESTVRNAVETLRHHGALDYTIVVTAAASQPAPLLYLAPYAGVAMAEEFMYSGKHVLVVYDDLSKQAAAYRELSLLLRRPPGREAYPGDVFYLHSRLLERAAKLNDSLGGGSITALPFVETQAGDISAYIPTNVISITDGQIFLQSDLFFSGVRPAINAGLSVSRVGGSAQIKAMKTVAGTLRLDLAAYRELESFSQFGSDLDAATRAKLERGKRTVEVLKQDLHKPLKVEKQVLILYALVHKYLDDVPVHDVLRFESEMNTWFDHNHPELLEEIRTTKKLPDEAKLEAALKEFKNTFVPSEEK</sequence>
<keyword id="KW-0066">ATP synthesis</keyword>
<keyword id="KW-0067">ATP-binding</keyword>
<keyword id="KW-1003">Cell membrane</keyword>
<keyword id="KW-0139">CF(1)</keyword>
<keyword id="KW-0375">Hydrogen ion transport</keyword>
<keyword id="KW-0406">Ion transport</keyword>
<keyword id="KW-0472">Membrane</keyword>
<keyword id="KW-0547">Nucleotide-binding</keyword>
<keyword id="KW-1278">Translocase</keyword>
<keyword id="KW-0813">Transport</keyword>
<feature type="chain" id="PRO_0000238278" description="ATP synthase subunit alpha 2">
    <location>
        <begin position="1"/>
        <end position="504"/>
    </location>
</feature>
<feature type="binding site" evidence="1">
    <location>
        <begin position="169"/>
        <end position="176"/>
    </location>
    <ligand>
        <name>ATP</name>
        <dbReference type="ChEBI" id="CHEBI:30616"/>
    </ligand>
</feature>
<feature type="site" description="Required for activity" evidence="1">
    <location>
        <position position="362"/>
    </location>
</feature>
<protein>
    <recommendedName>
        <fullName evidence="1">ATP synthase subunit alpha 2</fullName>
        <ecNumber evidence="1">7.1.2.2</ecNumber>
    </recommendedName>
    <alternativeName>
        <fullName evidence="1">ATP synthase F1 sector subunit alpha 2</fullName>
    </alternativeName>
    <alternativeName>
        <fullName evidence="1">F-ATPase subunit alpha 2</fullName>
    </alternativeName>
</protein>
<comment type="function">
    <text evidence="1">Produces ATP from ADP in the presence of a proton gradient across the membrane. The alpha chain is a regulatory subunit.</text>
</comment>
<comment type="catalytic activity">
    <reaction evidence="1">
        <text>ATP + H2O + 4 H(+)(in) = ADP + phosphate + 5 H(+)(out)</text>
        <dbReference type="Rhea" id="RHEA:57720"/>
        <dbReference type="ChEBI" id="CHEBI:15377"/>
        <dbReference type="ChEBI" id="CHEBI:15378"/>
        <dbReference type="ChEBI" id="CHEBI:30616"/>
        <dbReference type="ChEBI" id="CHEBI:43474"/>
        <dbReference type="ChEBI" id="CHEBI:456216"/>
        <dbReference type="EC" id="7.1.2.2"/>
    </reaction>
</comment>
<comment type="subunit">
    <text evidence="1">F-type ATPases have 2 components, CF(1) - the catalytic core - and CF(0) - the membrane proton channel. CF(1) has five subunits: alpha(3), beta(3), gamma(1), delta(1), epsilon(1). CF(0) has three main subunits: a(1), b(2) and c(9-12). The alpha and beta chains form an alternating ring which encloses part of the gamma chain. CF(1) is attached to CF(0) by a central stalk formed by the gamma and epsilon chains, while a peripheral stalk is formed by the delta and b chains.</text>
</comment>
<comment type="subcellular location">
    <subcellularLocation>
        <location evidence="1">Cell membrane</location>
        <topology evidence="1">Peripheral membrane protein</topology>
    </subcellularLocation>
</comment>
<comment type="similarity">
    <text evidence="1">Belongs to the ATPase alpha/beta chains family.</text>
</comment>
<dbReference type="EC" id="7.1.2.2" evidence="1"/>
<dbReference type="EMBL" id="AL596173">
    <property type="protein sequence ID" value="CAC97901.1"/>
    <property type="molecule type" value="Genomic_DNA"/>
</dbReference>
<dbReference type="PIR" id="AE1766">
    <property type="entry name" value="AE1766"/>
</dbReference>
<dbReference type="SMR" id="Q927W2"/>
<dbReference type="STRING" id="272626.gene:17567055"/>
<dbReference type="KEGG" id="lin:atpA"/>
<dbReference type="eggNOG" id="COG0056">
    <property type="taxonomic scope" value="Bacteria"/>
</dbReference>
<dbReference type="HOGENOM" id="CLU_010091_2_1_9"/>
<dbReference type="OrthoDB" id="9803053at2"/>
<dbReference type="Proteomes" id="UP000002513">
    <property type="component" value="Chromosome"/>
</dbReference>
<dbReference type="GO" id="GO:0005886">
    <property type="term" value="C:plasma membrane"/>
    <property type="evidence" value="ECO:0007669"/>
    <property type="project" value="UniProtKB-SubCell"/>
</dbReference>
<dbReference type="GO" id="GO:0045259">
    <property type="term" value="C:proton-transporting ATP synthase complex"/>
    <property type="evidence" value="ECO:0007669"/>
    <property type="project" value="UniProtKB-KW"/>
</dbReference>
<dbReference type="GO" id="GO:0043531">
    <property type="term" value="F:ADP binding"/>
    <property type="evidence" value="ECO:0007669"/>
    <property type="project" value="TreeGrafter"/>
</dbReference>
<dbReference type="GO" id="GO:0005524">
    <property type="term" value="F:ATP binding"/>
    <property type="evidence" value="ECO:0007669"/>
    <property type="project" value="UniProtKB-UniRule"/>
</dbReference>
<dbReference type="GO" id="GO:0046933">
    <property type="term" value="F:proton-transporting ATP synthase activity, rotational mechanism"/>
    <property type="evidence" value="ECO:0007669"/>
    <property type="project" value="UniProtKB-UniRule"/>
</dbReference>
<dbReference type="CDD" id="cd18113">
    <property type="entry name" value="ATP-synt_F1_alpha_C"/>
    <property type="match status" value="1"/>
</dbReference>
<dbReference type="CDD" id="cd18116">
    <property type="entry name" value="ATP-synt_F1_alpha_N"/>
    <property type="match status" value="1"/>
</dbReference>
<dbReference type="CDD" id="cd01132">
    <property type="entry name" value="F1-ATPase_alpha_CD"/>
    <property type="match status" value="1"/>
</dbReference>
<dbReference type="FunFam" id="1.20.150.20:FF:000001">
    <property type="entry name" value="ATP synthase subunit alpha"/>
    <property type="match status" value="1"/>
</dbReference>
<dbReference type="FunFam" id="2.40.30.20:FF:000001">
    <property type="entry name" value="ATP synthase subunit alpha"/>
    <property type="match status" value="1"/>
</dbReference>
<dbReference type="FunFam" id="3.40.50.300:FF:000002">
    <property type="entry name" value="ATP synthase subunit alpha"/>
    <property type="match status" value="1"/>
</dbReference>
<dbReference type="Gene3D" id="2.40.30.20">
    <property type="match status" value="1"/>
</dbReference>
<dbReference type="Gene3D" id="1.20.150.20">
    <property type="entry name" value="ATP synthase alpha/beta chain, C-terminal domain"/>
    <property type="match status" value="1"/>
</dbReference>
<dbReference type="Gene3D" id="3.40.50.300">
    <property type="entry name" value="P-loop containing nucleotide triphosphate hydrolases"/>
    <property type="match status" value="1"/>
</dbReference>
<dbReference type="HAMAP" id="MF_01346">
    <property type="entry name" value="ATP_synth_alpha_bact"/>
    <property type="match status" value="1"/>
</dbReference>
<dbReference type="InterPro" id="IPR023366">
    <property type="entry name" value="ATP_synth_asu-like_sf"/>
</dbReference>
<dbReference type="InterPro" id="IPR000793">
    <property type="entry name" value="ATP_synth_asu_C"/>
</dbReference>
<dbReference type="InterPro" id="IPR038376">
    <property type="entry name" value="ATP_synth_asu_C_sf"/>
</dbReference>
<dbReference type="InterPro" id="IPR033732">
    <property type="entry name" value="ATP_synth_F1_a_nt-bd_dom"/>
</dbReference>
<dbReference type="InterPro" id="IPR005294">
    <property type="entry name" value="ATP_synth_F1_asu"/>
</dbReference>
<dbReference type="InterPro" id="IPR020003">
    <property type="entry name" value="ATPase_a/bsu_AS"/>
</dbReference>
<dbReference type="InterPro" id="IPR004100">
    <property type="entry name" value="ATPase_F1/V1/A1_a/bsu_N"/>
</dbReference>
<dbReference type="InterPro" id="IPR036121">
    <property type="entry name" value="ATPase_F1/V1/A1_a/bsu_N_sf"/>
</dbReference>
<dbReference type="InterPro" id="IPR000194">
    <property type="entry name" value="ATPase_F1/V1/A1_a/bsu_nucl-bd"/>
</dbReference>
<dbReference type="InterPro" id="IPR027417">
    <property type="entry name" value="P-loop_NTPase"/>
</dbReference>
<dbReference type="NCBIfam" id="TIGR00962">
    <property type="entry name" value="atpA"/>
    <property type="match status" value="1"/>
</dbReference>
<dbReference type="NCBIfam" id="NF009884">
    <property type="entry name" value="PRK13343.1"/>
    <property type="match status" value="1"/>
</dbReference>
<dbReference type="PANTHER" id="PTHR48082">
    <property type="entry name" value="ATP SYNTHASE SUBUNIT ALPHA, MITOCHONDRIAL"/>
    <property type="match status" value="1"/>
</dbReference>
<dbReference type="PANTHER" id="PTHR48082:SF2">
    <property type="entry name" value="ATP SYNTHASE SUBUNIT ALPHA, MITOCHONDRIAL"/>
    <property type="match status" value="1"/>
</dbReference>
<dbReference type="Pfam" id="PF00006">
    <property type="entry name" value="ATP-synt_ab"/>
    <property type="match status" value="1"/>
</dbReference>
<dbReference type="Pfam" id="PF00306">
    <property type="entry name" value="ATP-synt_ab_C"/>
    <property type="match status" value="1"/>
</dbReference>
<dbReference type="Pfam" id="PF02874">
    <property type="entry name" value="ATP-synt_ab_N"/>
    <property type="match status" value="1"/>
</dbReference>
<dbReference type="PIRSF" id="PIRSF039088">
    <property type="entry name" value="F_ATPase_subunit_alpha"/>
    <property type="match status" value="1"/>
</dbReference>
<dbReference type="SUPFAM" id="SSF47917">
    <property type="entry name" value="C-terminal domain of alpha and beta subunits of F1 ATP synthase"/>
    <property type="match status" value="1"/>
</dbReference>
<dbReference type="SUPFAM" id="SSF50615">
    <property type="entry name" value="N-terminal domain of alpha and beta subunits of F1 ATP synthase"/>
    <property type="match status" value="1"/>
</dbReference>
<dbReference type="SUPFAM" id="SSF52540">
    <property type="entry name" value="P-loop containing nucleoside triphosphate hydrolases"/>
    <property type="match status" value="1"/>
</dbReference>
<dbReference type="PROSITE" id="PS00152">
    <property type="entry name" value="ATPASE_ALPHA_BETA"/>
    <property type="match status" value="1"/>
</dbReference>
<reference key="1">
    <citation type="journal article" date="2001" name="Science">
        <title>Comparative genomics of Listeria species.</title>
        <authorList>
            <person name="Glaser P."/>
            <person name="Frangeul L."/>
            <person name="Buchrieser C."/>
            <person name="Rusniok C."/>
            <person name="Amend A."/>
            <person name="Baquero F."/>
            <person name="Berche P."/>
            <person name="Bloecker H."/>
            <person name="Brandt P."/>
            <person name="Chakraborty T."/>
            <person name="Charbit A."/>
            <person name="Chetouani F."/>
            <person name="Couve E."/>
            <person name="de Daruvar A."/>
            <person name="Dehoux P."/>
            <person name="Domann E."/>
            <person name="Dominguez-Bernal G."/>
            <person name="Duchaud E."/>
            <person name="Durant L."/>
            <person name="Dussurget O."/>
            <person name="Entian K.-D."/>
            <person name="Fsihi H."/>
            <person name="Garcia-del Portillo F."/>
            <person name="Garrido P."/>
            <person name="Gautier L."/>
            <person name="Goebel W."/>
            <person name="Gomez-Lopez N."/>
            <person name="Hain T."/>
            <person name="Hauf J."/>
            <person name="Jackson D."/>
            <person name="Jones L.-M."/>
            <person name="Kaerst U."/>
            <person name="Kreft J."/>
            <person name="Kuhn M."/>
            <person name="Kunst F."/>
            <person name="Kurapkat G."/>
            <person name="Madueno E."/>
            <person name="Maitournam A."/>
            <person name="Mata Vicente J."/>
            <person name="Ng E."/>
            <person name="Nedjari H."/>
            <person name="Nordsiek G."/>
            <person name="Novella S."/>
            <person name="de Pablos B."/>
            <person name="Perez-Diaz J.-C."/>
            <person name="Purcell R."/>
            <person name="Remmel B."/>
            <person name="Rose M."/>
            <person name="Schlueter T."/>
            <person name="Simoes N."/>
            <person name="Tierrez A."/>
            <person name="Vazquez-Boland J.-A."/>
            <person name="Voss H."/>
            <person name="Wehland J."/>
            <person name="Cossart P."/>
        </authorList>
    </citation>
    <scope>NUCLEOTIDE SEQUENCE [LARGE SCALE GENOMIC DNA]</scope>
    <source>
        <strain>ATCC BAA-680 / CLIP 11262</strain>
    </source>
</reference>